<evidence type="ECO:0000250" key="1">
    <source>
        <dbReference type="UniProtKB" id="O60760"/>
    </source>
</evidence>
<evidence type="ECO:0000250" key="2">
    <source>
        <dbReference type="UniProtKB" id="P46088"/>
    </source>
</evidence>
<evidence type="ECO:0000250" key="3">
    <source>
        <dbReference type="UniProtKB" id="P46436"/>
    </source>
</evidence>
<evidence type="ECO:0000269" key="4">
    <source>
    </source>
</evidence>
<evidence type="ECO:0000305" key="5"/>
<evidence type="ECO:0007829" key="6">
    <source>
        <dbReference type="PDB" id="1ZL9"/>
    </source>
</evidence>
<gene>
    <name type="primary">gst-5</name>
    <name type="ORF">R03D7.6</name>
</gene>
<accession>Q09596</accession>
<organism>
    <name type="scientific">Caenorhabditis elegans</name>
    <dbReference type="NCBI Taxonomy" id="6239"/>
    <lineage>
        <taxon>Eukaryota</taxon>
        <taxon>Metazoa</taxon>
        <taxon>Ecdysozoa</taxon>
        <taxon>Nematoda</taxon>
        <taxon>Chromadorea</taxon>
        <taxon>Rhabditida</taxon>
        <taxon>Rhabditina</taxon>
        <taxon>Rhabditomorpha</taxon>
        <taxon>Rhabditoidea</taxon>
        <taxon>Rhabditidae</taxon>
        <taxon>Peloderinae</taxon>
        <taxon>Caenorhabditis</taxon>
    </lineage>
</organism>
<sequence>MVSYKLTYFNGRGAGEVSRQIFAYAGQQYEDNRVTQEQWPALKETCAAPFGQLPFLEVDGKKLAQSHAIARFLAREFKLNGKTAWEEAQVNSLADQYKDYSSEARPYFYAVMGFGPGDVETLKKDIFLPAFEKFYGFLVNFLKASGSGFLVGDSLTWIDLAIAQHSADLIAKGGDFSKFPELKAHAEKIQAIPQIKKWIETRPVTPF</sequence>
<comment type="function">
    <text evidence="3 4">Conjugation of reduced glutathione to a wide number of exogenous and endogenous hydrophobic electrophiles (By similarity). May play a role in the detoxification of reactive oxygen species produced during pathogenic bacterial infection (PubMed:22216003).</text>
</comment>
<comment type="catalytic activity">
    <reaction>
        <text>RX + glutathione = an S-substituted glutathione + a halide anion + H(+)</text>
        <dbReference type="Rhea" id="RHEA:16437"/>
        <dbReference type="ChEBI" id="CHEBI:15378"/>
        <dbReference type="ChEBI" id="CHEBI:16042"/>
        <dbReference type="ChEBI" id="CHEBI:17792"/>
        <dbReference type="ChEBI" id="CHEBI:57925"/>
        <dbReference type="ChEBI" id="CHEBI:90779"/>
        <dbReference type="EC" id="2.5.1.18"/>
    </reaction>
</comment>
<comment type="similarity">
    <text evidence="5">Belongs to the GST superfamily. Sigma family.</text>
</comment>
<proteinExistence type="evidence at protein level"/>
<feature type="chain" id="PRO_0000185928" description="Probable glutathione S-transferase 5">
    <location>
        <begin position="1"/>
        <end position="207"/>
    </location>
</feature>
<feature type="domain" description="GST N-terminal">
    <location>
        <begin position="2"/>
        <end position="81"/>
    </location>
</feature>
<feature type="domain" description="GST C-terminal">
    <location>
        <begin position="83"/>
        <end position="207"/>
    </location>
</feature>
<feature type="binding site" evidence="1">
    <location>
        <position position="8"/>
    </location>
    <ligand>
        <name>glutathione</name>
        <dbReference type="ChEBI" id="CHEBI:57925"/>
    </ligand>
</feature>
<feature type="binding site" evidence="1">
    <location>
        <position position="39"/>
    </location>
    <ligand>
        <name>glutathione</name>
        <dbReference type="ChEBI" id="CHEBI:57925"/>
    </ligand>
</feature>
<feature type="binding site" evidence="2">
    <location>
        <position position="43"/>
    </location>
    <ligand>
        <name>glutathione</name>
        <dbReference type="ChEBI" id="CHEBI:57925"/>
    </ligand>
</feature>
<feature type="binding site" evidence="1">
    <location>
        <begin position="51"/>
        <end position="53"/>
    </location>
    <ligand>
        <name>glutathione</name>
        <dbReference type="ChEBI" id="CHEBI:57925"/>
    </ligand>
</feature>
<feature type="binding site" evidence="1">
    <location>
        <begin position="65"/>
        <end position="66"/>
    </location>
    <ligand>
        <name>glutathione</name>
        <dbReference type="ChEBI" id="CHEBI:57925"/>
    </ligand>
</feature>
<feature type="strand" evidence="6">
    <location>
        <begin position="4"/>
        <end position="12"/>
    </location>
</feature>
<feature type="helix" evidence="6">
    <location>
        <begin position="13"/>
        <end position="15"/>
    </location>
</feature>
<feature type="helix" evidence="6">
    <location>
        <begin position="16"/>
        <end position="25"/>
    </location>
</feature>
<feature type="strand" evidence="6">
    <location>
        <begin position="30"/>
        <end position="34"/>
    </location>
</feature>
<feature type="turn" evidence="6">
    <location>
        <begin position="36"/>
        <end position="38"/>
    </location>
</feature>
<feature type="helix" evidence="6">
    <location>
        <begin position="39"/>
        <end position="44"/>
    </location>
</feature>
<feature type="strand" evidence="6">
    <location>
        <begin position="55"/>
        <end position="58"/>
    </location>
</feature>
<feature type="strand" evidence="6">
    <location>
        <begin position="61"/>
        <end position="64"/>
    </location>
</feature>
<feature type="helix" evidence="6">
    <location>
        <begin position="66"/>
        <end position="76"/>
    </location>
</feature>
<feature type="helix" evidence="6">
    <location>
        <begin position="84"/>
        <end position="111"/>
    </location>
</feature>
<feature type="helix" evidence="6">
    <location>
        <begin position="119"/>
        <end position="125"/>
    </location>
</feature>
<feature type="helix" evidence="6">
    <location>
        <begin position="127"/>
        <end position="145"/>
    </location>
</feature>
<feature type="strand" evidence="6">
    <location>
        <begin position="147"/>
        <end position="151"/>
    </location>
</feature>
<feature type="helix" evidence="6">
    <location>
        <begin position="157"/>
        <end position="171"/>
    </location>
</feature>
<feature type="helix" evidence="6">
    <location>
        <begin position="180"/>
        <end position="191"/>
    </location>
</feature>
<feature type="helix" evidence="6">
    <location>
        <begin position="193"/>
        <end position="201"/>
    </location>
</feature>
<name>GST5_CAEEL</name>
<reference key="1">
    <citation type="journal article" date="1998" name="Science">
        <title>Genome sequence of the nematode C. elegans: a platform for investigating biology.</title>
        <authorList>
            <consortium name="The C. elegans sequencing consortium"/>
        </authorList>
    </citation>
    <scope>NUCLEOTIDE SEQUENCE [LARGE SCALE GENOMIC DNA]</scope>
    <source>
        <strain>Bristol N2</strain>
    </source>
</reference>
<reference key="2">
    <citation type="journal article" date="2011" name="PLoS Pathog.">
        <title>Ce-Duox1/BLI-3 generated reactive oxygen species trigger protective SKN-1 activity via p38 MAPK signaling during infection in C. elegans.</title>
        <authorList>
            <person name="Hoeven R.V."/>
            <person name="McCallum K.C."/>
            <person name="Cruz M.R."/>
            <person name="Garsin D.A."/>
        </authorList>
    </citation>
    <scope>FUNCTION</scope>
</reference>
<protein>
    <recommendedName>
        <fullName>Probable glutathione S-transferase 5</fullName>
        <ecNumber>2.5.1.18</ecNumber>
    </recommendedName>
    <alternativeName>
        <fullName>GST class-sigma</fullName>
    </alternativeName>
</protein>
<keyword id="KW-0002">3D-structure</keyword>
<keyword id="KW-1185">Reference proteome</keyword>
<keyword id="KW-0808">Transferase</keyword>
<dbReference type="EC" id="2.5.1.18"/>
<dbReference type="EMBL" id="Z46828">
    <property type="protein sequence ID" value="CAA86859.1"/>
    <property type="molecule type" value="Genomic_DNA"/>
</dbReference>
<dbReference type="PIR" id="T23872">
    <property type="entry name" value="T23872"/>
</dbReference>
<dbReference type="RefSeq" id="NP_001254267.1">
    <property type="nucleotide sequence ID" value="NM_001267338.3"/>
</dbReference>
<dbReference type="PDB" id="1ZL9">
    <property type="method" value="X-ray"/>
    <property type="resolution" value="2.01 A"/>
    <property type="chains" value="A/B=1-207"/>
</dbReference>
<dbReference type="PDBsum" id="1ZL9"/>
<dbReference type="SMR" id="Q09596"/>
<dbReference type="BioGRID" id="52227">
    <property type="interactions" value="44"/>
</dbReference>
<dbReference type="DIP" id="DIP-26899N"/>
<dbReference type="FunCoup" id="Q09596">
    <property type="interactions" value="126"/>
</dbReference>
<dbReference type="IntAct" id="Q09596">
    <property type="interactions" value="26"/>
</dbReference>
<dbReference type="STRING" id="6239.R03D7.6a.1"/>
<dbReference type="PaxDb" id="6239-R03D7.6a"/>
<dbReference type="PeptideAtlas" id="Q09596"/>
<dbReference type="EnsemblMetazoa" id="R03D7.6a.1">
    <property type="protein sequence ID" value="R03D7.6a.1"/>
    <property type="gene ID" value="WBGene00001753"/>
</dbReference>
<dbReference type="GeneID" id="187537"/>
<dbReference type="KEGG" id="cel:CELE_R03D7.6"/>
<dbReference type="UCSC" id="R03D7.6">
    <property type="organism name" value="c. elegans"/>
</dbReference>
<dbReference type="AGR" id="WB:WBGene00001753"/>
<dbReference type="CTD" id="187537"/>
<dbReference type="WormBase" id="R03D7.6a">
    <property type="protein sequence ID" value="CE01613"/>
    <property type="gene ID" value="WBGene00001753"/>
    <property type="gene designation" value="gst-5"/>
</dbReference>
<dbReference type="eggNOG" id="KOG1695">
    <property type="taxonomic scope" value="Eukaryota"/>
</dbReference>
<dbReference type="GeneTree" id="ENSGT00970000196005"/>
<dbReference type="HOGENOM" id="CLU_039475_1_1_1"/>
<dbReference type="InParanoid" id="Q09596"/>
<dbReference type="OMA" id="THEEWPK"/>
<dbReference type="OrthoDB" id="414243at2759"/>
<dbReference type="PhylomeDB" id="Q09596"/>
<dbReference type="SignaLink" id="Q09596"/>
<dbReference type="EvolutionaryTrace" id="Q09596"/>
<dbReference type="PRO" id="PR:Q09596"/>
<dbReference type="Proteomes" id="UP000001940">
    <property type="component" value="Chromosome II"/>
</dbReference>
<dbReference type="ExpressionAtlas" id="Q09596">
    <property type="expression patterns" value="baseline and differential"/>
</dbReference>
<dbReference type="GO" id="GO:0004364">
    <property type="term" value="F:glutathione transferase activity"/>
    <property type="evidence" value="ECO:0000318"/>
    <property type="project" value="GO_Central"/>
</dbReference>
<dbReference type="GO" id="GO:0006749">
    <property type="term" value="P:glutathione metabolic process"/>
    <property type="evidence" value="ECO:0000318"/>
    <property type="project" value="GO_Central"/>
</dbReference>
<dbReference type="GO" id="GO:0045087">
    <property type="term" value="P:innate immune response"/>
    <property type="evidence" value="ECO:0007007"/>
    <property type="project" value="WormBase"/>
</dbReference>
<dbReference type="CDD" id="cd03192">
    <property type="entry name" value="GST_C_Sigma_like"/>
    <property type="match status" value="1"/>
</dbReference>
<dbReference type="CDD" id="cd03039">
    <property type="entry name" value="GST_N_Sigma_like"/>
    <property type="match status" value="1"/>
</dbReference>
<dbReference type="FunFam" id="1.20.1050.10:FF:000031">
    <property type="entry name" value="Glutathione S-Transferase"/>
    <property type="match status" value="1"/>
</dbReference>
<dbReference type="FunFam" id="3.40.30.10:FF:000035">
    <property type="entry name" value="hematopoietic prostaglandin D synthase"/>
    <property type="match status" value="1"/>
</dbReference>
<dbReference type="Gene3D" id="1.20.1050.10">
    <property type="match status" value="1"/>
</dbReference>
<dbReference type="Gene3D" id="3.40.30.10">
    <property type="entry name" value="Glutaredoxin"/>
    <property type="match status" value="1"/>
</dbReference>
<dbReference type="InterPro" id="IPR010987">
    <property type="entry name" value="Glutathione-S-Trfase_C-like"/>
</dbReference>
<dbReference type="InterPro" id="IPR036282">
    <property type="entry name" value="Glutathione-S-Trfase_C_sf"/>
</dbReference>
<dbReference type="InterPro" id="IPR040079">
    <property type="entry name" value="Glutathione_S-Trfase"/>
</dbReference>
<dbReference type="InterPro" id="IPR004045">
    <property type="entry name" value="Glutathione_S-Trfase_N"/>
</dbReference>
<dbReference type="InterPro" id="IPR004046">
    <property type="entry name" value="GST_C"/>
</dbReference>
<dbReference type="InterPro" id="IPR050213">
    <property type="entry name" value="GST_superfamily"/>
</dbReference>
<dbReference type="InterPro" id="IPR036249">
    <property type="entry name" value="Thioredoxin-like_sf"/>
</dbReference>
<dbReference type="PANTHER" id="PTHR11571">
    <property type="entry name" value="GLUTATHIONE S-TRANSFERASE"/>
    <property type="match status" value="1"/>
</dbReference>
<dbReference type="PANTHER" id="PTHR11571:SF132">
    <property type="entry name" value="GLUTATHIONE TRANSFERASE-RELATED"/>
    <property type="match status" value="1"/>
</dbReference>
<dbReference type="Pfam" id="PF14497">
    <property type="entry name" value="GST_C_3"/>
    <property type="match status" value="1"/>
</dbReference>
<dbReference type="Pfam" id="PF02798">
    <property type="entry name" value="GST_N"/>
    <property type="match status" value="1"/>
</dbReference>
<dbReference type="SFLD" id="SFLDG01205">
    <property type="entry name" value="AMPS.1"/>
    <property type="match status" value="1"/>
</dbReference>
<dbReference type="SFLD" id="SFLDS00019">
    <property type="entry name" value="Glutathione_Transferase_(cytos"/>
    <property type="match status" value="1"/>
</dbReference>
<dbReference type="SUPFAM" id="SSF47616">
    <property type="entry name" value="GST C-terminal domain-like"/>
    <property type="match status" value="1"/>
</dbReference>
<dbReference type="SUPFAM" id="SSF52833">
    <property type="entry name" value="Thioredoxin-like"/>
    <property type="match status" value="1"/>
</dbReference>
<dbReference type="PROSITE" id="PS50405">
    <property type="entry name" value="GST_CTER"/>
    <property type="match status" value="1"/>
</dbReference>
<dbReference type="PROSITE" id="PS50404">
    <property type="entry name" value="GST_NTER"/>
    <property type="match status" value="1"/>
</dbReference>